<keyword id="KW-0204">Cytolysis</keyword>
<keyword id="KW-1030">Host cell inner membrane</keyword>
<keyword id="KW-0578">Host cell lysis by virus</keyword>
<keyword id="KW-1032">Host cell membrane</keyword>
<keyword id="KW-1043">Host membrane</keyword>
<keyword id="KW-0472">Membrane</keyword>
<keyword id="KW-1185">Reference proteome</keyword>
<keyword id="KW-0735">Signal-anchor</keyword>
<keyword id="KW-0812">Transmembrane</keyword>
<keyword id="KW-1133">Transmembrane helix</keyword>
<keyword id="KW-1188">Viral release from host cell</keyword>
<organism>
    <name type="scientific">Pseudomonas phage phiKMV</name>
    <dbReference type="NCBI Taxonomy" id="204270"/>
    <lineage>
        <taxon>Viruses</taxon>
        <taxon>Duplodnaviria</taxon>
        <taxon>Heunggongvirae</taxon>
        <taxon>Uroviricota</taxon>
        <taxon>Caudoviricetes</taxon>
        <taxon>Autographiviridae</taxon>
        <taxon>Krylovirinae</taxon>
        <taxon>Phikmvvirus</taxon>
        <taxon>Phikmvvirus phiKMV</taxon>
    </lineage>
</organism>
<feature type="chain" id="PRO_0000429258" description="Holin">
    <location>
        <begin position="1"/>
        <end position="66"/>
    </location>
</feature>
<feature type="topological domain" description="Cytoplasmic" evidence="2">
    <location>
        <begin position="1"/>
        <end position="29"/>
    </location>
</feature>
<feature type="transmembrane region" description="Helical; Signal-anchor for type II membrane protein" evidence="2">
    <location>
        <begin position="30"/>
        <end position="50"/>
    </location>
</feature>
<feature type="topological domain" description="Periplasmic" evidence="2">
    <location>
        <begin position="51"/>
        <end position="66"/>
    </location>
</feature>
<accession>Q7Y2C1</accession>
<evidence type="ECO:0000250" key="1">
    <source>
        <dbReference type="UniProtKB" id="P03705"/>
    </source>
</evidence>
<evidence type="ECO:0000255" key="2"/>
<evidence type="ECO:0000269" key="3">
    <source>
    </source>
</evidence>
<evidence type="ECO:0000303" key="4">
    <source>
    </source>
</evidence>
<evidence type="ECO:0000305" key="5"/>
<proteinExistence type="evidence at protein level"/>
<sequence length="66" mass="7016">MMLDTATEAGKGTLAVTGVGIAVYSPYEIASLCAAVLTALYVGAQLITLLPKMLDSIAELRRRFKK</sequence>
<comment type="function">
    <text evidence="3">Accumulates harmlessly in the cytoplasmic membrane until it reaches a critical concentration that triggers the formation of nanometer-scale pores (pinholes) causing host cell membrane depolarization and endolysin refolding and release into the periplasmic space (PubMed:21687532). Once the pinholin has permeabilized the host cell membrane, the SAR-endolysin is released into the periplasm and breaks down the peptidoglycan layer (PubMed:21687532). Determines the precise timing of host cell lysis. Participates with the SAR-endolysin and the U-spanin protein in the sequential events which lead to the programmed host cell lysis releasing the mature viral particles from the host cell (PubMed:21687532).</text>
</comment>
<comment type="subunit">
    <text evidence="5">Homomultimer.</text>
</comment>
<comment type="subcellular location">
    <subcellularLocation>
        <location evidence="1">Host cell inner membrane</location>
        <topology evidence="2">Single-pass type II membrane protein</topology>
    </subcellularLocation>
</comment>
<reference key="1">
    <citation type="journal article" date="2003" name="Virology">
        <title>The genome of bacteriophage phiKMV, a T7-like virus infecting Pseudomonas aeruginosa.</title>
        <authorList>
            <person name="Lavigne R."/>
            <person name="Burkal'tseva M.V."/>
            <person name="Robben J."/>
            <person name="Sykilinda N.N."/>
            <person name="Kurochkina L.P."/>
            <person name="Grymonprez B."/>
            <person name="Jonckx B."/>
            <person name="Krylov V.N."/>
            <person name="Mesyanzhinov V.V."/>
            <person name="Volckaert G."/>
        </authorList>
    </citation>
    <scope>NUCLEOTIDE SEQUENCE [GENOMIC DNA]</scope>
</reference>
<reference key="2">
    <citation type="journal article" date="2004" name="Cell. Mol. Life Sci.">
        <title>Identification and characterization of a highly thermostable bacteriophage lysozyme.</title>
        <authorList>
            <person name="Lavigne R."/>
            <person name="Briers Y."/>
            <person name="Hertveldt K."/>
            <person name="Robben J."/>
            <person name="Volckaert G."/>
        </authorList>
    </citation>
    <scope>NUCLEOTIDE SEQUENCE [GENOMIC DNA]</scope>
</reference>
<reference key="3">
    <citation type="journal article" date="2005" name="Protein Pept. Lett.">
        <title>Characterization of the bacteriophage PhiKMV DNA ligase.</title>
        <authorList>
            <person name="Lavigne R."/>
            <person name="Roucourt B."/>
            <person name="Hertveldt K."/>
            <person name="Volckaert G."/>
        </authorList>
    </citation>
    <scope>NUCLEOTIDE SEQUENCE [GENOMIC DNA]</scope>
</reference>
<reference key="4">
    <citation type="journal article" date="2011" name="Bacteriophage">
        <title>The lysis cassette of bacteriophage varphiKMV encodes a signal-arrest-release endolysin and a pinholin.</title>
        <authorList>
            <person name="Briers Y."/>
            <person name="Peeters L.M."/>
            <person name="Volckaert G."/>
            <person name="Lavigne R."/>
        </authorList>
    </citation>
    <scope>CHARACTERIZATION</scope>
    <scope>FUNCTION</scope>
</reference>
<gene>
    <name type="ORF">44</name>
</gene>
<name>HOLIN_BPKMV</name>
<protein>
    <recommendedName>
        <fullName evidence="5">Holin</fullName>
    </recommendedName>
    <alternativeName>
        <fullName evidence="4">KMV44</fullName>
    </alternativeName>
    <alternativeName>
        <fullName evidence="4">Pinholin</fullName>
    </alternativeName>
</protein>
<organismHost>
    <name type="scientific">Pseudomonas aeruginosa</name>
    <dbReference type="NCBI Taxonomy" id="287"/>
</organismHost>
<dbReference type="EMBL" id="AJ505558">
    <property type="protein sequence ID" value="CAD44235.1"/>
    <property type="molecule type" value="Genomic_DNA"/>
</dbReference>
<dbReference type="RefSeq" id="NP_877483.1">
    <property type="nucleotide sequence ID" value="NC_005045.1"/>
</dbReference>
<dbReference type="SMR" id="Q7Y2C1"/>
<dbReference type="TCDB" id="1.E.61.1.1">
    <property type="family name" value="the pseudomonas phage phikmv (ppkmv holin) family"/>
</dbReference>
<dbReference type="KEGG" id="vg:2641773"/>
<dbReference type="OrthoDB" id="23914at10239"/>
<dbReference type="Proteomes" id="UP000000842">
    <property type="component" value="Genome"/>
</dbReference>
<dbReference type="GO" id="GO:0020002">
    <property type="term" value="C:host cell plasma membrane"/>
    <property type="evidence" value="ECO:0007669"/>
    <property type="project" value="UniProtKB-SubCell"/>
</dbReference>
<dbReference type="GO" id="GO:0016020">
    <property type="term" value="C:membrane"/>
    <property type="evidence" value="ECO:0007669"/>
    <property type="project" value="UniProtKB-KW"/>
</dbReference>
<dbReference type="GO" id="GO:0140911">
    <property type="term" value="F:pore-forming activity"/>
    <property type="evidence" value="ECO:0000316"/>
    <property type="project" value="CACAO"/>
</dbReference>
<dbReference type="GO" id="GO:0031640">
    <property type="term" value="P:killing of cells of another organism"/>
    <property type="evidence" value="ECO:0007669"/>
    <property type="project" value="UniProtKB-KW"/>
</dbReference>
<dbReference type="NCBIfam" id="NF037949">
    <property type="entry name" value="holin_5"/>
    <property type="match status" value="1"/>
</dbReference>